<dbReference type="EC" id="6.3.2.6" evidence="1"/>
<dbReference type="EMBL" id="CP000087">
    <property type="protein sequence ID" value="ABE04615.1"/>
    <property type="molecule type" value="Genomic_DNA"/>
</dbReference>
<dbReference type="RefSeq" id="WP_011477206.1">
    <property type="nucleotide sequence ID" value="NC_007940.1"/>
</dbReference>
<dbReference type="SMR" id="Q1RJ49"/>
<dbReference type="KEGG" id="rbe:RBE_0534"/>
<dbReference type="eggNOG" id="COG0152">
    <property type="taxonomic scope" value="Bacteria"/>
</dbReference>
<dbReference type="HOGENOM" id="CLU_061495_2_0_5"/>
<dbReference type="OrthoDB" id="9801549at2"/>
<dbReference type="UniPathway" id="UPA00074">
    <property type="reaction ID" value="UER00131"/>
</dbReference>
<dbReference type="Proteomes" id="UP000001951">
    <property type="component" value="Chromosome"/>
</dbReference>
<dbReference type="GO" id="GO:0005829">
    <property type="term" value="C:cytosol"/>
    <property type="evidence" value="ECO:0007669"/>
    <property type="project" value="TreeGrafter"/>
</dbReference>
<dbReference type="GO" id="GO:0005524">
    <property type="term" value="F:ATP binding"/>
    <property type="evidence" value="ECO:0007669"/>
    <property type="project" value="UniProtKB-KW"/>
</dbReference>
<dbReference type="GO" id="GO:0004639">
    <property type="term" value="F:phosphoribosylaminoimidazolesuccinocarboxamide synthase activity"/>
    <property type="evidence" value="ECO:0007669"/>
    <property type="project" value="UniProtKB-UniRule"/>
</dbReference>
<dbReference type="GO" id="GO:0006189">
    <property type="term" value="P:'de novo' IMP biosynthetic process"/>
    <property type="evidence" value="ECO:0007669"/>
    <property type="project" value="UniProtKB-UniRule"/>
</dbReference>
<dbReference type="GO" id="GO:0009236">
    <property type="term" value="P:cobalamin biosynthetic process"/>
    <property type="evidence" value="ECO:0007669"/>
    <property type="project" value="InterPro"/>
</dbReference>
<dbReference type="CDD" id="cd01415">
    <property type="entry name" value="SAICAR_synt_PurC"/>
    <property type="match status" value="1"/>
</dbReference>
<dbReference type="Gene3D" id="3.30.470.20">
    <property type="entry name" value="ATP-grasp fold, B domain"/>
    <property type="match status" value="1"/>
</dbReference>
<dbReference type="Gene3D" id="3.30.200.20">
    <property type="entry name" value="Phosphorylase Kinase, domain 1"/>
    <property type="match status" value="1"/>
</dbReference>
<dbReference type="HAMAP" id="MF_00137">
    <property type="entry name" value="SAICAR_synth"/>
    <property type="match status" value="1"/>
</dbReference>
<dbReference type="InterPro" id="IPR028923">
    <property type="entry name" value="SAICAR_synt/ADE2_N"/>
</dbReference>
<dbReference type="InterPro" id="IPR033934">
    <property type="entry name" value="SAICAR_synt_PurC"/>
</dbReference>
<dbReference type="InterPro" id="IPR050089">
    <property type="entry name" value="SAICAR_synthetase"/>
</dbReference>
<dbReference type="PANTHER" id="PTHR43599">
    <property type="entry name" value="MULTIFUNCTIONAL PROTEIN ADE2"/>
    <property type="match status" value="1"/>
</dbReference>
<dbReference type="PANTHER" id="PTHR43599:SF3">
    <property type="entry name" value="SI:DKEY-6E2.2"/>
    <property type="match status" value="1"/>
</dbReference>
<dbReference type="Pfam" id="PF01259">
    <property type="entry name" value="SAICAR_synt"/>
    <property type="match status" value="1"/>
</dbReference>
<dbReference type="SUPFAM" id="SSF56104">
    <property type="entry name" value="SAICAR synthase-like"/>
    <property type="match status" value="1"/>
</dbReference>
<sequence length="236" mass="27226">MKKKLYEGSSKTLYSSEEEFLLVMAFSDKATLENGEIIDVSGKGVLNNNISSFVMNKLEMIGIENHFIEKLNMREQLIQYVEMFPLQVVVSSVACGRFVKEFGMDEGFVFDKPIIDFKVKSREFKYPIVNEHQILNFGWLTKDEINTVKKQALRIYDFLSGLFIGIGIRLVECNLEFGRVFTGEESLVMLTDEISPDTCKLWHINSNERLGFELLEKDPAKAYESYKLIADRLKEK</sequence>
<organism>
    <name type="scientific">Rickettsia bellii (strain RML369-C)</name>
    <dbReference type="NCBI Taxonomy" id="336407"/>
    <lineage>
        <taxon>Bacteria</taxon>
        <taxon>Pseudomonadati</taxon>
        <taxon>Pseudomonadota</taxon>
        <taxon>Alphaproteobacteria</taxon>
        <taxon>Rickettsiales</taxon>
        <taxon>Rickettsiaceae</taxon>
        <taxon>Rickettsieae</taxon>
        <taxon>Rickettsia</taxon>
        <taxon>belli group</taxon>
    </lineage>
</organism>
<gene>
    <name evidence="1" type="primary">purC</name>
    <name type="ordered locus">RBE_0534</name>
</gene>
<keyword id="KW-0067">ATP-binding</keyword>
<keyword id="KW-0436">Ligase</keyword>
<keyword id="KW-0547">Nucleotide-binding</keyword>
<keyword id="KW-0658">Purine biosynthesis</keyword>
<protein>
    <recommendedName>
        <fullName evidence="1">Phosphoribosylaminoimidazole-succinocarboxamide synthase</fullName>
        <ecNumber evidence="1">6.3.2.6</ecNumber>
    </recommendedName>
    <alternativeName>
        <fullName evidence="1">SAICAR synthetase</fullName>
    </alternativeName>
</protein>
<proteinExistence type="inferred from homology"/>
<accession>Q1RJ49</accession>
<comment type="catalytic activity">
    <reaction evidence="1">
        <text>5-amino-1-(5-phospho-D-ribosyl)imidazole-4-carboxylate + L-aspartate + ATP = (2S)-2-[5-amino-1-(5-phospho-beta-D-ribosyl)imidazole-4-carboxamido]succinate + ADP + phosphate + 2 H(+)</text>
        <dbReference type="Rhea" id="RHEA:22628"/>
        <dbReference type="ChEBI" id="CHEBI:15378"/>
        <dbReference type="ChEBI" id="CHEBI:29991"/>
        <dbReference type="ChEBI" id="CHEBI:30616"/>
        <dbReference type="ChEBI" id="CHEBI:43474"/>
        <dbReference type="ChEBI" id="CHEBI:58443"/>
        <dbReference type="ChEBI" id="CHEBI:77657"/>
        <dbReference type="ChEBI" id="CHEBI:456216"/>
        <dbReference type="EC" id="6.3.2.6"/>
    </reaction>
</comment>
<comment type="pathway">
    <text evidence="1">Purine metabolism; IMP biosynthesis via de novo pathway; 5-amino-1-(5-phospho-D-ribosyl)imidazole-4-carboxamide from 5-amino-1-(5-phospho-D-ribosyl)imidazole-4-carboxylate: step 1/2.</text>
</comment>
<comment type="similarity">
    <text evidence="1">Belongs to the SAICAR synthetase family.</text>
</comment>
<evidence type="ECO:0000255" key="1">
    <source>
        <dbReference type="HAMAP-Rule" id="MF_00137"/>
    </source>
</evidence>
<feature type="chain" id="PRO_0000274847" description="Phosphoribosylaminoimidazole-succinocarboxamide synthase">
    <location>
        <begin position="1"/>
        <end position="236"/>
    </location>
</feature>
<reference key="1">
    <citation type="journal article" date="2006" name="PLoS Genet.">
        <title>Genome sequence of Rickettsia bellii illuminates the role of amoebae in gene exchanges between intracellular pathogens.</title>
        <authorList>
            <person name="Ogata H."/>
            <person name="La Scola B."/>
            <person name="Audic S."/>
            <person name="Renesto P."/>
            <person name="Blanc G."/>
            <person name="Robert C."/>
            <person name="Fournier P.-E."/>
            <person name="Claverie J.-M."/>
            <person name="Raoult D."/>
        </authorList>
    </citation>
    <scope>NUCLEOTIDE SEQUENCE [LARGE SCALE GENOMIC DNA]</scope>
    <source>
        <strain>RML369-C</strain>
    </source>
</reference>
<name>PUR7_RICBR</name>